<keyword id="KW-1015">Disulfide bond</keyword>
<keyword id="KW-0391">Immunity</keyword>
<keyword id="KW-0393">Immunoglobulin domain</keyword>
<keyword id="KW-0490">MHC I</keyword>
<keyword id="KW-0964">Secreted</keyword>
<keyword id="KW-0732">Signal</keyword>
<comment type="function">
    <text evidence="1">Component of the class I major histocompatibility complex (MHC). Involved in the presentation of peptide antigens to the immune system (By similarity).</text>
</comment>
<comment type="subunit">
    <text evidence="1">Heterodimer of an alpha chain and a beta chain. Beta-2-microglobulin is the beta-chain of major histocompatibility complex class I molecules (By similarity).</text>
</comment>
<comment type="subcellular location">
    <subcellularLocation>
        <location evidence="1">Secreted</location>
    </subcellularLocation>
</comment>
<comment type="similarity">
    <text evidence="3">Belongs to the beta-2-microglobulin family.</text>
</comment>
<sequence length="119" mass="13657">MARLVVVALLVLLCLSGLEAIQHAPKIQVYSRHPAENGKPNFLNCYVSGFHPSDIEVDLLKNGKKIEKVEHSDLSFSKDWSFYLLYYTEFTPNDKDEYACRVSDVTFTAPKTVKWDRNM</sequence>
<reference key="1">
    <citation type="journal article" date="1998" name="Immunogenetics">
        <title>Beta-2-microglobulin in neotropical primates (Platyrrhini).</title>
        <authorList>
            <person name="Canavez F.C."/>
            <person name="Ladasky J.J."/>
            <person name="Muniz J.A.P.C."/>
            <person name="Seuanez H.N."/>
            <person name="Parham P."/>
        </authorList>
    </citation>
    <scope>NUCLEOTIDE SEQUENCE [GENOMIC DNA]</scope>
    <source>
        <tissue>Blood</tissue>
    </source>
</reference>
<name>B2MG_CHISA</name>
<proteinExistence type="inferred from homology"/>
<evidence type="ECO:0000250" key="1"/>
<evidence type="ECO:0000255" key="2">
    <source>
        <dbReference type="PROSITE-ProRule" id="PRU00114"/>
    </source>
</evidence>
<evidence type="ECO:0000305" key="3"/>
<organism>
    <name type="scientific">Chiropotes satanas</name>
    <name type="common">Brown-bearded saki</name>
    <dbReference type="NCBI Taxonomy" id="9525"/>
    <lineage>
        <taxon>Eukaryota</taxon>
        <taxon>Metazoa</taxon>
        <taxon>Chordata</taxon>
        <taxon>Craniata</taxon>
        <taxon>Vertebrata</taxon>
        <taxon>Euteleostomi</taxon>
        <taxon>Mammalia</taxon>
        <taxon>Eutheria</taxon>
        <taxon>Euarchontoglires</taxon>
        <taxon>Primates</taxon>
        <taxon>Haplorrhini</taxon>
        <taxon>Platyrrhini</taxon>
        <taxon>Pitheciidae</taxon>
        <taxon>Pitheciinae</taxon>
        <taxon>Chiropotes</taxon>
    </lineage>
</organism>
<protein>
    <recommendedName>
        <fullName>Beta-2-microglobulin</fullName>
    </recommendedName>
</protein>
<dbReference type="EMBL" id="AF032075">
    <property type="protein sequence ID" value="AAC52097.1"/>
    <property type="molecule type" value="Genomic_DNA"/>
</dbReference>
<dbReference type="EMBL" id="AF032074">
    <property type="protein sequence ID" value="AAC52097.1"/>
    <property type="status" value="JOINED"/>
    <property type="molecule type" value="Genomic_DNA"/>
</dbReference>
<dbReference type="SMR" id="O77532"/>
<dbReference type="GO" id="GO:0005576">
    <property type="term" value="C:extracellular region"/>
    <property type="evidence" value="ECO:0007669"/>
    <property type="project" value="UniProtKB-SubCell"/>
</dbReference>
<dbReference type="GO" id="GO:0042612">
    <property type="term" value="C:MHC class I protein complex"/>
    <property type="evidence" value="ECO:0007669"/>
    <property type="project" value="UniProtKB-KW"/>
</dbReference>
<dbReference type="GO" id="GO:0002474">
    <property type="term" value="P:antigen processing and presentation of peptide antigen via MHC class I"/>
    <property type="evidence" value="ECO:0007669"/>
    <property type="project" value="UniProtKB-KW"/>
</dbReference>
<dbReference type="GO" id="GO:0006955">
    <property type="term" value="P:immune response"/>
    <property type="evidence" value="ECO:0007669"/>
    <property type="project" value="InterPro"/>
</dbReference>
<dbReference type="CDD" id="cd05770">
    <property type="entry name" value="IgC1_beta2m"/>
    <property type="match status" value="1"/>
</dbReference>
<dbReference type="FunFam" id="2.60.40.10:FF:001005">
    <property type="entry name" value="Beta-2-microglobulin"/>
    <property type="match status" value="1"/>
</dbReference>
<dbReference type="Gene3D" id="2.60.40.10">
    <property type="entry name" value="Immunoglobulins"/>
    <property type="match status" value="1"/>
</dbReference>
<dbReference type="InterPro" id="IPR015707">
    <property type="entry name" value="B2Microglobulin"/>
</dbReference>
<dbReference type="InterPro" id="IPR007110">
    <property type="entry name" value="Ig-like_dom"/>
</dbReference>
<dbReference type="InterPro" id="IPR036179">
    <property type="entry name" value="Ig-like_dom_sf"/>
</dbReference>
<dbReference type="InterPro" id="IPR013783">
    <property type="entry name" value="Ig-like_fold"/>
</dbReference>
<dbReference type="InterPro" id="IPR003597">
    <property type="entry name" value="Ig_C1-set"/>
</dbReference>
<dbReference type="InterPro" id="IPR050160">
    <property type="entry name" value="MHC/Immunoglobulin"/>
</dbReference>
<dbReference type="PANTHER" id="PTHR19944:SF62">
    <property type="entry name" value="BETA-2-MICROGLOBULIN"/>
    <property type="match status" value="1"/>
</dbReference>
<dbReference type="PANTHER" id="PTHR19944">
    <property type="entry name" value="MHC CLASS II-RELATED"/>
    <property type="match status" value="1"/>
</dbReference>
<dbReference type="Pfam" id="PF07654">
    <property type="entry name" value="C1-set"/>
    <property type="match status" value="1"/>
</dbReference>
<dbReference type="SMART" id="SM00407">
    <property type="entry name" value="IGc1"/>
    <property type="match status" value="1"/>
</dbReference>
<dbReference type="SUPFAM" id="SSF48726">
    <property type="entry name" value="Immunoglobulin"/>
    <property type="match status" value="1"/>
</dbReference>
<dbReference type="PROSITE" id="PS50835">
    <property type="entry name" value="IG_LIKE"/>
    <property type="match status" value="1"/>
</dbReference>
<gene>
    <name type="primary">B2M</name>
</gene>
<accession>O77532</accession>
<feature type="signal peptide" evidence="1">
    <location>
        <begin position="1"/>
        <end position="20"/>
    </location>
</feature>
<feature type="chain" id="PRO_0000018775" description="Beta-2-microglobulin">
    <location>
        <begin position="21"/>
        <end position="119"/>
    </location>
</feature>
<feature type="domain" description="Ig-like C1-type">
    <location>
        <begin position="25"/>
        <end position="114"/>
    </location>
</feature>
<feature type="disulfide bond" evidence="2">
    <location>
        <begin position="45"/>
        <end position="100"/>
    </location>
</feature>